<organism>
    <name type="scientific">Deinococcus radiodurans (strain ATCC 13939 / DSM 20539 / JCM 16871 / CCUG 27074 / LMG 4051 / NBRC 15346 / NCIMB 9279 / VKM B-1422 / R1)</name>
    <dbReference type="NCBI Taxonomy" id="243230"/>
    <lineage>
        <taxon>Bacteria</taxon>
        <taxon>Thermotogati</taxon>
        <taxon>Deinococcota</taxon>
        <taxon>Deinococci</taxon>
        <taxon>Deinococcales</taxon>
        <taxon>Deinococcaceae</taxon>
        <taxon>Deinococcus</taxon>
    </lineage>
</organism>
<feature type="chain" id="PRO_0000142002" description="1-(5-phosphoribosyl)-5-[(5-phosphoribosylamino)methylideneamino] imidazole-4-carboxamide isomerase">
    <location>
        <begin position="1"/>
        <end position="238"/>
    </location>
</feature>
<feature type="active site" description="Proton acceptor" evidence="1">
    <location>
        <position position="13"/>
    </location>
</feature>
<feature type="active site" description="Proton donor" evidence="1">
    <location>
        <position position="134"/>
    </location>
</feature>
<accession>Q9RRJ5</accession>
<comment type="catalytic activity">
    <reaction>
        <text>1-(5-phospho-beta-D-ribosyl)-5-[(5-phospho-beta-D-ribosylamino)methylideneamino]imidazole-4-carboxamide = 5-[(5-phospho-1-deoxy-D-ribulos-1-ylimino)methylamino]-1-(5-phospho-beta-D-ribosyl)imidazole-4-carboxamide</text>
        <dbReference type="Rhea" id="RHEA:15469"/>
        <dbReference type="ChEBI" id="CHEBI:58435"/>
        <dbReference type="ChEBI" id="CHEBI:58525"/>
        <dbReference type="EC" id="5.3.1.16"/>
    </reaction>
</comment>
<comment type="pathway">
    <text>Amino-acid biosynthesis; L-histidine biosynthesis; L-histidine from 5-phospho-alpha-D-ribose 1-diphosphate: step 4/9.</text>
</comment>
<comment type="subcellular location">
    <subcellularLocation>
        <location evidence="1">Cytoplasm</location>
    </subcellularLocation>
</comment>
<comment type="similarity">
    <text evidence="2">Belongs to the HisA/HisF family.</text>
</comment>
<protein>
    <recommendedName>
        <fullName>1-(5-phosphoribosyl)-5-[(5-phosphoribosylamino)methylideneamino] imidazole-4-carboxamide isomerase</fullName>
        <ecNumber>5.3.1.16</ecNumber>
    </recommendedName>
    <alternativeName>
        <fullName>Phosphoribosylformimino-5-aminoimidazole carboxamide ribotide isomerase</fullName>
    </alternativeName>
</protein>
<keyword id="KW-0028">Amino-acid biosynthesis</keyword>
<keyword id="KW-0963">Cytoplasm</keyword>
<keyword id="KW-0368">Histidine biosynthesis</keyword>
<keyword id="KW-0413">Isomerase</keyword>
<keyword id="KW-1185">Reference proteome</keyword>
<evidence type="ECO:0000250" key="1"/>
<evidence type="ECO:0000305" key="2"/>
<name>HIS4_DEIRA</name>
<gene>
    <name type="primary">hisA</name>
    <name type="ordered locus">DR_2495</name>
</gene>
<dbReference type="EC" id="5.3.1.16"/>
<dbReference type="EMBL" id="AE000513">
    <property type="protein sequence ID" value="AAF12037.1"/>
    <property type="molecule type" value="Genomic_DNA"/>
</dbReference>
<dbReference type="PIR" id="B75266">
    <property type="entry name" value="B75266"/>
</dbReference>
<dbReference type="RefSeq" id="NP_296215.1">
    <property type="nucleotide sequence ID" value="NC_001263.1"/>
</dbReference>
<dbReference type="RefSeq" id="WP_010889120.1">
    <property type="nucleotide sequence ID" value="NC_001263.1"/>
</dbReference>
<dbReference type="SMR" id="Q9RRJ5"/>
<dbReference type="FunCoup" id="Q9RRJ5">
    <property type="interactions" value="315"/>
</dbReference>
<dbReference type="STRING" id="243230.DR_2495"/>
<dbReference type="PaxDb" id="243230-DR_2495"/>
<dbReference type="EnsemblBacteria" id="AAF12037">
    <property type="protein sequence ID" value="AAF12037"/>
    <property type="gene ID" value="DR_2495"/>
</dbReference>
<dbReference type="GeneID" id="69518748"/>
<dbReference type="KEGG" id="dra:DR_2495"/>
<dbReference type="PATRIC" id="fig|243230.17.peg.2735"/>
<dbReference type="eggNOG" id="COG0106">
    <property type="taxonomic scope" value="Bacteria"/>
</dbReference>
<dbReference type="HOGENOM" id="CLU_048577_1_1_0"/>
<dbReference type="InParanoid" id="Q9RRJ5"/>
<dbReference type="OrthoDB" id="9781903at2"/>
<dbReference type="UniPathway" id="UPA00031">
    <property type="reaction ID" value="UER00009"/>
</dbReference>
<dbReference type="Proteomes" id="UP000002524">
    <property type="component" value="Chromosome 1"/>
</dbReference>
<dbReference type="GO" id="GO:0005737">
    <property type="term" value="C:cytoplasm"/>
    <property type="evidence" value="ECO:0000318"/>
    <property type="project" value="GO_Central"/>
</dbReference>
<dbReference type="GO" id="GO:0003949">
    <property type="term" value="F:1-(5-phosphoribosyl)-5-[(5-phosphoribosylamino)methylideneamino]imidazole-4-carboxamide isomerase activity"/>
    <property type="evidence" value="ECO:0000318"/>
    <property type="project" value="GO_Central"/>
</dbReference>
<dbReference type="GO" id="GO:0000105">
    <property type="term" value="P:L-histidine biosynthetic process"/>
    <property type="evidence" value="ECO:0000318"/>
    <property type="project" value="GO_Central"/>
</dbReference>
<dbReference type="CDD" id="cd04732">
    <property type="entry name" value="HisA"/>
    <property type="match status" value="1"/>
</dbReference>
<dbReference type="FunFam" id="3.20.20.70:FF:000009">
    <property type="entry name" value="1-(5-phosphoribosyl)-5-[(5-phosphoribosylamino)methylideneamino] imidazole-4-carboxamide isomerase"/>
    <property type="match status" value="1"/>
</dbReference>
<dbReference type="Gene3D" id="3.20.20.70">
    <property type="entry name" value="Aldolase class I"/>
    <property type="match status" value="1"/>
</dbReference>
<dbReference type="HAMAP" id="MF_01014">
    <property type="entry name" value="HisA"/>
    <property type="match status" value="1"/>
</dbReference>
<dbReference type="InterPro" id="IPR013785">
    <property type="entry name" value="Aldolase_TIM"/>
</dbReference>
<dbReference type="InterPro" id="IPR006062">
    <property type="entry name" value="His_biosynth"/>
</dbReference>
<dbReference type="InterPro" id="IPR006063">
    <property type="entry name" value="HisA_bact_arch"/>
</dbReference>
<dbReference type="InterPro" id="IPR044524">
    <property type="entry name" value="Isoase_HisA-like"/>
</dbReference>
<dbReference type="InterPro" id="IPR023016">
    <property type="entry name" value="Isoase_HisA-like_bact"/>
</dbReference>
<dbReference type="InterPro" id="IPR011060">
    <property type="entry name" value="RibuloseP-bd_barrel"/>
</dbReference>
<dbReference type="NCBIfam" id="TIGR00007">
    <property type="entry name" value="1-(5-phosphoribosyl)-5-[(5-phosphoribosylamino)methylideneamino]imidazole-4-carboxamide isomerase"/>
    <property type="match status" value="1"/>
</dbReference>
<dbReference type="PANTHER" id="PTHR43090">
    <property type="entry name" value="1-(5-PHOSPHORIBOSYL)-5-[(5-PHOSPHORIBOSYLAMINO)METHYLIDENEAMINO] IMIDAZOLE-4-CARBOXAMIDE ISOMERASE"/>
    <property type="match status" value="1"/>
</dbReference>
<dbReference type="PANTHER" id="PTHR43090:SF2">
    <property type="entry name" value="1-(5-PHOSPHORIBOSYL)-5-[(5-PHOSPHORIBOSYLAMINO)METHYLIDENEAMINO] IMIDAZOLE-4-CARBOXAMIDE ISOMERASE"/>
    <property type="match status" value="1"/>
</dbReference>
<dbReference type="Pfam" id="PF00977">
    <property type="entry name" value="His_biosynth"/>
    <property type="match status" value="1"/>
</dbReference>
<dbReference type="SUPFAM" id="SSF51366">
    <property type="entry name" value="Ribulose-phoshate binding barrel"/>
    <property type="match status" value="1"/>
</dbReference>
<proteinExistence type="inferred from homology"/>
<reference key="1">
    <citation type="journal article" date="1999" name="Science">
        <title>Genome sequence of the radioresistant bacterium Deinococcus radiodurans R1.</title>
        <authorList>
            <person name="White O."/>
            <person name="Eisen J.A."/>
            <person name="Heidelberg J.F."/>
            <person name="Hickey E.K."/>
            <person name="Peterson J.D."/>
            <person name="Dodson R.J."/>
            <person name="Haft D.H."/>
            <person name="Gwinn M.L."/>
            <person name="Nelson W.C."/>
            <person name="Richardson D.L."/>
            <person name="Moffat K.S."/>
            <person name="Qin H."/>
            <person name="Jiang L."/>
            <person name="Pamphile W."/>
            <person name="Crosby M."/>
            <person name="Shen M."/>
            <person name="Vamathevan J.J."/>
            <person name="Lam P."/>
            <person name="McDonald L.A."/>
            <person name="Utterback T.R."/>
            <person name="Zalewski C."/>
            <person name="Makarova K.S."/>
            <person name="Aravind L."/>
            <person name="Daly M.J."/>
            <person name="Minton K.W."/>
            <person name="Fleischmann R.D."/>
            <person name="Ketchum K.A."/>
            <person name="Nelson K.E."/>
            <person name="Salzberg S.L."/>
            <person name="Smith H.O."/>
            <person name="Venter J.C."/>
            <person name="Fraser C.M."/>
        </authorList>
    </citation>
    <scope>NUCLEOTIDE SEQUENCE [LARGE SCALE GENOMIC DNA]</scope>
    <source>
        <strain>ATCC 13939 / DSM 20539 / JCM 16871 / CCUG 27074 / LMG 4051 / NBRC 15346 / NCIMB 9279 / VKM B-1422 / R1</strain>
    </source>
</reference>
<sequence>MTLPLPQVIPCVDIQSGRAVRLYEGDPDRETVYFDSPRAAARHWVTLGAGFLHLVDLDAATGRGENRAVIAEIVRELGVPVEVGGGVRDRAAAQSLLTAGVARVVIGTAAVRNPELVAELIAEYGPERVVVSLDARGLEVATHGWAAGSGVSVADLTPRLAEAGLRTLIFTDVTRDGTLRGLDRDLMRQVRGLWHGELIVGGGVADTNDVRLLAEEGIEGAIVGRAIYEGTLPYPVRL</sequence>